<keyword id="KW-0025">Alternative splicing</keyword>
<keyword id="KW-0067">ATP-binding</keyword>
<keyword id="KW-0106">Calcium</keyword>
<keyword id="KW-0109">Calcium transport</keyword>
<keyword id="KW-0112">Calmodulin-binding</keyword>
<keyword id="KW-1003">Cell membrane</keyword>
<keyword id="KW-0209">Deafness</keyword>
<keyword id="KW-0225">Disease variant</keyword>
<keyword id="KW-0406">Ion transport</keyword>
<keyword id="KW-0460">Magnesium</keyword>
<keyword id="KW-0472">Membrane</keyword>
<keyword id="KW-0479">Metal-binding</keyword>
<keyword id="KW-1010">Non-syndromic deafness</keyword>
<keyword id="KW-0547">Nucleotide-binding</keyword>
<keyword id="KW-0597">Phosphoprotein</keyword>
<keyword id="KW-1267">Proteomics identification</keyword>
<keyword id="KW-1185">Reference proteome</keyword>
<keyword id="KW-0770">Synapse</keyword>
<keyword id="KW-1278">Translocase</keyword>
<keyword id="KW-0812">Transmembrane</keyword>
<keyword id="KW-1133">Transmembrane helix</keyword>
<keyword id="KW-0813">Transport</keyword>
<name>AT2B2_HUMAN</name>
<feature type="chain" id="PRO_0000046214" description="Plasma membrane calcium-transporting ATPase 2">
    <location>
        <begin position="1"/>
        <end position="1243"/>
    </location>
</feature>
<feature type="topological domain" description="Cytoplasmic" evidence="4">
    <location>
        <begin position="1"/>
        <end position="94"/>
    </location>
</feature>
<feature type="transmembrane region" description="Helical" evidence="4">
    <location>
        <begin position="95"/>
        <end position="115"/>
    </location>
</feature>
<feature type="topological domain" description="Extracellular" evidence="4">
    <location>
        <begin position="116"/>
        <end position="152"/>
    </location>
</feature>
<feature type="transmembrane region" description="Helical" evidence="4">
    <location>
        <begin position="153"/>
        <end position="173"/>
    </location>
</feature>
<feature type="topological domain" description="Cytoplasmic" evidence="4">
    <location>
        <begin position="174"/>
        <end position="390"/>
    </location>
</feature>
<feature type="transmembrane region" description="Helical" evidence="4">
    <location>
        <begin position="391"/>
        <end position="410"/>
    </location>
</feature>
<feature type="topological domain" description="Extracellular" evidence="4">
    <location>
        <begin position="411"/>
        <end position="443"/>
    </location>
</feature>
<feature type="transmembrane region" description="Helical" evidence="4">
    <location>
        <begin position="444"/>
        <end position="461"/>
    </location>
</feature>
<feature type="topological domain" description="Cytoplasmic" evidence="4">
    <location>
        <begin position="462"/>
        <end position="875"/>
    </location>
</feature>
<feature type="transmembrane region" description="Helical" evidence="4">
    <location>
        <begin position="876"/>
        <end position="895"/>
    </location>
</feature>
<feature type="topological domain" description="Extracellular" evidence="4">
    <location>
        <begin position="896"/>
        <end position="905"/>
    </location>
</feature>
<feature type="transmembrane region" description="Helical" evidence="4">
    <location>
        <begin position="906"/>
        <end position="926"/>
    </location>
</feature>
<feature type="topological domain" description="Cytoplasmic" evidence="4">
    <location>
        <begin position="927"/>
        <end position="946"/>
    </location>
</feature>
<feature type="transmembrane region" description="Helical" evidence="4">
    <location>
        <begin position="947"/>
        <end position="969"/>
    </location>
</feature>
<feature type="topological domain" description="Extracellular" evidence="4">
    <location>
        <begin position="970"/>
        <end position="987"/>
    </location>
</feature>
<feature type="transmembrane region" description="Helical" evidence="4">
    <location>
        <begin position="988"/>
        <end position="1009"/>
    </location>
</feature>
<feature type="topological domain" description="Cytoplasmic" evidence="4">
    <location>
        <begin position="1010"/>
        <end position="1028"/>
    </location>
</feature>
<feature type="transmembrane region" description="Helical" evidence="4">
    <location>
        <begin position="1029"/>
        <end position="1050"/>
    </location>
</feature>
<feature type="topological domain" description="Extracellular" evidence="4">
    <location>
        <begin position="1051"/>
        <end position="1060"/>
    </location>
</feature>
<feature type="transmembrane region" description="Helical" evidence="4">
    <location>
        <begin position="1061"/>
        <end position="1082"/>
    </location>
</feature>
<feature type="topological domain" description="Cytoplasmic" evidence="4">
    <location>
        <begin position="1083"/>
        <end position="1243"/>
    </location>
</feature>
<feature type="region of interest" description="Disordered" evidence="5">
    <location>
        <begin position="1"/>
        <end position="24"/>
    </location>
</feature>
<feature type="region of interest" description="Disordered" evidence="5">
    <location>
        <begin position="334"/>
        <end position="381"/>
    </location>
</feature>
<feature type="region of interest" description="Calmodulin-binding subdomain A" evidence="1">
    <location>
        <begin position="1123"/>
        <end position="1140"/>
    </location>
</feature>
<feature type="region of interest" description="Calmodulin-binding subdomain B" evidence="1">
    <location>
        <begin position="1141"/>
        <end position="1150"/>
    </location>
</feature>
<feature type="region of interest" description="Disordered" evidence="5">
    <location>
        <begin position="1194"/>
        <end position="1243"/>
    </location>
</feature>
<feature type="compositionally biased region" description="Polar residues" evidence="5">
    <location>
        <begin position="1"/>
        <end position="13"/>
    </location>
</feature>
<feature type="compositionally biased region" description="Low complexity" evidence="5">
    <location>
        <begin position="1196"/>
        <end position="1211"/>
    </location>
</feature>
<feature type="compositionally biased region" description="Low complexity" evidence="5">
    <location>
        <begin position="1220"/>
        <end position="1234"/>
    </location>
</feature>
<feature type="active site" description="4-aspartylphosphate intermediate">
    <location>
        <position position="499"/>
    </location>
</feature>
<feature type="binding site" evidence="1">
    <location>
        <position position="820"/>
    </location>
    <ligand>
        <name>Mg(2+)</name>
        <dbReference type="ChEBI" id="CHEBI:18420"/>
    </ligand>
</feature>
<feature type="binding site" evidence="1">
    <location>
        <position position="824"/>
    </location>
    <ligand>
        <name>Mg(2+)</name>
        <dbReference type="ChEBI" id="CHEBI:18420"/>
    </ligand>
</feature>
<feature type="modified residue" description="Phosphoserine" evidence="3">
    <location>
        <position position="18"/>
    </location>
</feature>
<feature type="modified residue" description="Phosphothreonine; by PKC" evidence="2">
    <location>
        <position position="1139"/>
    </location>
</feature>
<feature type="modified residue" description="Phosphoserine" evidence="3">
    <location>
        <position position="1178"/>
    </location>
</feature>
<feature type="modified residue" description="Phosphothreonine" evidence="3">
    <location>
        <position position="1188"/>
    </location>
</feature>
<feature type="modified residue" description="Phosphoserine; by PKA" evidence="3">
    <location>
        <position position="1201"/>
    </location>
</feature>
<feature type="modified residue" description="Phosphoserine" evidence="21">
    <location>
        <position position="1211"/>
    </location>
</feature>
<feature type="splice variant" id="VSP_000384" description="In isoform ZA and isoform ZB." evidence="13 15">
    <location>
        <begin position="303"/>
        <end position="347"/>
    </location>
</feature>
<feature type="splice variant" id="VSP_040837" description="In isoform XA and isoform XB." evidence="16">
    <location>
        <begin position="304"/>
        <end position="334"/>
    </location>
</feature>
<feature type="splice variant" id="VSP_000385" description="In isoform YA and isoform YB." evidence="16">
    <location>
        <begin position="334"/>
        <end position="347"/>
    </location>
</feature>
<feature type="splice variant" id="VSP_000386" description="In isoform WA, isoform XA, isoform YA and isoform ZA." evidence="16">
    <original>IRVVKAFRSSLYEGLEKPESRTSIHNFMAHPEFRIEDSQPHIPLIDDTDLEEDAALKQNSSPPSSLNKNNSAIDSGINLTTDTSKSATSSSPGSPIHSLETSL</original>
    <variation>IEVVNTFKSGASFQGALRRQSSVTSQSQDVANLSSPSRVSLSNALSSPTSLPPAAAGQG</variation>
    <location>
        <begin position="1141"/>
        <end position="1243"/>
    </location>
</feature>
<feature type="sequence variant" id="VAR_084464" description="May exacerbate the severity of non-syndromic sensorineural hearing loss in patients with clinically relevant CDH23 variants; delayed calcium export." evidence="9">
    <original>G</original>
    <variation>S</variation>
    <location>
        <position position="293"/>
    </location>
</feature>
<feature type="sequence variant" id="VAR_084465" description="May exacerbate the severity of non-syndromic sensorineural hearing loss in patients with clinically relevant CDH23 variants; resulted in 50% decrease of the calcium ATPase activity." evidence="8">
    <original>V</original>
    <variation>M</variation>
    <location>
        <position position="631"/>
    </location>
</feature>
<feature type="sequence variant" id="VAR_086987" description="In DFNA82." evidence="11">
    <location>
        <begin position="655"/>
        <end position="1243"/>
    </location>
</feature>
<feature type="sequence variant" id="VAR_086988" description="In DFNA82." evidence="11">
    <location>
        <begin position="666"/>
        <end position="1243"/>
    </location>
</feature>
<feature type="sequence variant" id="VAR_086989" description="In DFNA82." evidence="11">
    <location>
        <begin position="777"/>
        <end position="1243"/>
    </location>
</feature>
<feature type="sequence conflict" description="In Ref. 1; AAA36456." evidence="16" ref="1">
    <original>PKT</original>
    <variation>AKP</variation>
    <location>
        <begin position="92"/>
        <end position="94"/>
    </location>
</feature>
<feature type="sequence conflict" description="In Ref. 2; AAA50877/AAA51893." evidence="16" ref="2">
    <original>P</original>
    <variation>R</variation>
    <location>
        <position position="126"/>
    </location>
</feature>
<feature type="sequence conflict" description="In Ref. 2; AAA50877/AAA51893." evidence="16" ref="2">
    <original>G</original>
    <variation>D</variation>
    <location>
        <position position="517"/>
    </location>
</feature>
<feature type="sequence conflict" description="In Ref. 1; AAA36456." evidence="16" ref="1">
    <original>DG</original>
    <variation>EW</variation>
    <location>
        <begin position="667"/>
        <end position="668"/>
    </location>
</feature>
<feature type="sequence conflict" description="In Ref. 1; AAA36456." evidence="16" ref="1">
    <original>A</original>
    <variation>S</variation>
    <location>
        <position position="1212"/>
    </location>
</feature>
<feature type="modified residue" description="Phosphoserine" evidence="21">
    <location sequence="Q01814-2">
        <position position="1165"/>
    </location>
</feature>
<feature type="modified residue" description="Phosphoserine" evidence="20">
    <location sequence="Q01814-2">
        <position position="1177"/>
    </location>
</feature>
<feature type="modified residue" description="Phosphoserine" evidence="21">
    <location sequence="Q01814-3">
        <position position="1151"/>
    </location>
</feature>
<feature type="modified residue" description="Phosphoserine" evidence="20">
    <location sequence="Q01814-3">
        <position position="1163"/>
    </location>
</feature>
<feature type="modified residue" description="Phosphoserine" evidence="21">
    <location sequence="Q01814-4">
        <position position="1120"/>
    </location>
</feature>
<feature type="modified residue" description="Phosphoserine" evidence="20">
    <location sequence="Q01814-4">
        <position position="1132"/>
    </location>
</feature>
<feature type="modified residue" description="Phosphoserine" evidence="21">
    <location sequence="Q01814-7">
        <position position="1134"/>
    </location>
</feature>
<feature type="modified residue" description="Phosphoserine" evidence="20">
    <location sequence="Q01814-7">
        <position position="1146"/>
    </location>
</feature>
<sequence length="1243" mass="136876">MGDMTNSDFYSKNQRNESSHGGEFGCTMEELRSLMELRGTEAVVKIKETYGDTEAICRRLKTSPVEGLPGTAPDLEKRKQIFGQNFIPPKKPKTFLQLVWEALQDVTLIILEIAAIISLGLSFYHPPGEGNEGCATAQGGAEDEGEAEAGWIEGAAILLSVICVVLVTAFNDWSKEKQFRGLQSRIEQEQKFTVVRAGQVVQIPVAEIVVGDIAQVKYGDLLPADGLFIQGNDLKIDESSLTGESDQVRKSVDKDPMLLSGTHVMEGSGRMLVTAVGVNSQTGIIFTLLGAGGEEEEKKDKKGVKKGDGLQLPAADGAAASNAADSANASLVNGKMQDGNVDASQSKAKQQDGAAAMEMQPLKSAEGGDADDRKKASMHKKEKSVLQGKLTKLAVQIGKAGLVMSAITVIILVLYFTVDTFVVNKKPWLPECTPVYVQYFVKFFIIGVTVLVVAVPEGLPLAVTISLAYSVKKMMKDNNLVRHLDACETMGNATAICSDKTGTLTTNRMTVVQAYVGDVHYKEIPDPSSINTKTMELLINAIAINSAYTTKILPPEKEGALPRQVGNKTECGLLGFVLDLKQDYEPVRSQMPEEKLYKVYTFNSVRKSMSTVIKLPDESFRMYSKGASEIVLKKCCKILNGAGEPRVFRPRDRDEMVKKVIEPMACDGLRTICVAYRDFPSSPEPDWDNENDILNELTCICVVGIEDPVRPEVPEAIRKCQRAGITVRMVTGDNINTARAIAIKCGIIHPGEDFLCLEGKEFNRRIRNEKGEIEQERIDKIWPKLRVLARSSPTDKHTLVKGIIDSTHTEQRQVVAVTGDGTNDGPALKKADVGFAMGIAGTDVAKEASDIILTDDNFSSIVKAVMWGRNVYDSISKFLQFQLTVNVVAVIVAFTGACITQDSPLKAVQMLWVNLIMDTFASLALATEPPTETLLLRKPYGRNKPLISRTMMKNILGHAVYQLALIFTLLFVGEKMFQIDSGRNAPLHSPPSEHYTIIFNTFVMMQLFNEINARKIHGERNVFDGIFRNPIFCTIVLGTFAIQIVIVQFGGKPFSCSPLQLDQWMWCIFIGLGELVWGQVIATIPTSRLKFLKEAGRLTQKEEIPEEELNEDVEEIDHAERELRRGQILWFRGLNRIQTQIRVVKAFRSSLYEGLEKPESRTSIHNFMAHPEFRIEDSQPHIPLIDDTDLEEDAALKQNSSPPSSLNKNNSAIDSGINLTTDTSKSATSSSPGSPIHSLETSL</sequence>
<evidence type="ECO:0000250" key="1"/>
<evidence type="ECO:0000250" key="2">
    <source>
        <dbReference type="UniProtKB" id="P20020"/>
    </source>
</evidence>
<evidence type="ECO:0000250" key="3">
    <source>
        <dbReference type="UniProtKB" id="Q9R0K7"/>
    </source>
</evidence>
<evidence type="ECO:0000255" key="4"/>
<evidence type="ECO:0000256" key="5">
    <source>
        <dbReference type="SAM" id="MobiDB-lite"/>
    </source>
</evidence>
<evidence type="ECO:0000269" key="6">
    <source>
    </source>
</evidence>
<evidence type="ECO:0000269" key="7">
    <source>
    </source>
</evidence>
<evidence type="ECO:0000269" key="8">
    <source>
    </source>
</evidence>
<evidence type="ECO:0000269" key="9">
    <source>
    </source>
</evidence>
<evidence type="ECO:0000269" key="10">
    <source>
    </source>
</evidence>
<evidence type="ECO:0000269" key="11">
    <source>
    </source>
</evidence>
<evidence type="ECO:0000269" key="12">
    <source>
    </source>
</evidence>
<evidence type="ECO:0000303" key="13">
    <source>
    </source>
</evidence>
<evidence type="ECO:0000303" key="14">
    <source>
    </source>
</evidence>
<evidence type="ECO:0000303" key="15">
    <source>
    </source>
</evidence>
<evidence type="ECO:0000305" key="16"/>
<evidence type="ECO:0000305" key="17">
    <source>
    </source>
</evidence>
<evidence type="ECO:0000305" key="18">
    <source>
    </source>
</evidence>
<evidence type="ECO:0000312" key="19">
    <source>
        <dbReference type="HGNC" id="HGNC:815"/>
    </source>
</evidence>
<evidence type="ECO:0007744" key="20">
    <source>
    </source>
</evidence>
<evidence type="ECO:0007744" key="21">
    <source>
    </source>
</evidence>
<gene>
    <name evidence="14 19" type="primary">ATP2B2</name>
    <name evidence="14" type="synonym">PMCA2</name>
</gene>
<accession>Q01814</accession>
<accession>O00766</accession>
<accession>Q12994</accession>
<accession>Q16818</accession>
<proteinExistence type="evidence at protein level"/>
<organism>
    <name type="scientific">Homo sapiens</name>
    <name type="common">Human</name>
    <dbReference type="NCBI Taxonomy" id="9606"/>
    <lineage>
        <taxon>Eukaryota</taxon>
        <taxon>Metazoa</taxon>
        <taxon>Chordata</taxon>
        <taxon>Craniata</taxon>
        <taxon>Vertebrata</taxon>
        <taxon>Euteleostomi</taxon>
        <taxon>Mammalia</taxon>
        <taxon>Eutheria</taxon>
        <taxon>Euarchontoglires</taxon>
        <taxon>Primates</taxon>
        <taxon>Haplorrhini</taxon>
        <taxon>Catarrhini</taxon>
        <taxon>Hominidae</taxon>
        <taxon>Homo</taxon>
    </lineage>
</organism>
<dbReference type="EC" id="7.2.2.10" evidence="8 9"/>
<dbReference type="EMBL" id="M97260">
    <property type="protein sequence ID" value="AAA36456.1"/>
    <property type="molecule type" value="mRNA"/>
</dbReference>
<dbReference type="EMBL" id="L20977">
    <property type="protein sequence ID" value="AAA50877.1"/>
    <property type="molecule type" value="mRNA"/>
</dbReference>
<dbReference type="EMBL" id="L00620">
    <property type="protein sequence ID" value="AAA51893.1"/>
    <property type="molecule type" value="mRNA"/>
</dbReference>
<dbReference type="EMBL" id="X63575">
    <property type="protein sequence ID" value="CAA45131.1"/>
    <property type="molecule type" value="mRNA"/>
</dbReference>
<dbReference type="EMBL" id="AC018839">
    <property type="status" value="NOT_ANNOTATED_CDS"/>
    <property type="molecule type" value="Genomic_DNA"/>
</dbReference>
<dbReference type="EMBL" id="AC090841">
    <property type="status" value="NOT_ANNOTATED_CDS"/>
    <property type="molecule type" value="Genomic_DNA"/>
</dbReference>
<dbReference type="EMBL" id="U15688">
    <property type="protein sequence ID" value="AAA60985.1"/>
    <property type="molecule type" value="mRNA"/>
</dbReference>
<dbReference type="CCDS" id="CCDS2601.1">
    <molecule id="Q01814-6"/>
</dbReference>
<dbReference type="CCDS" id="CCDS33701.1">
    <molecule id="Q01814-1"/>
</dbReference>
<dbReference type="CCDS" id="CCDS82733.1">
    <molecule id="Q01814-4"/>
</dbReference>
<dbReference type="PIR" id="S22393">
    <property type="entry name" value="S22393"/>
</dbReference>
<dbReference type="RefSeq" id="NP_001001331.1">
    <molecule id="Q01814-1"/>
    <property type="nucleotide sequence ID" value="NM_001001331.4"/>
</dbReference>
<dbReference type="RefSeq" id="NP_001317540.1">
    <molecule id="Q01814-4"/>
    <property type="nucleotide sequence ID" value="NM_001330611.3"/>
</dbReference>
<dbReference type="RefSeq" id="NP_001340493.1">
    <molecule id="Q01814-6"/>
    <property type="nucleotide sequence ID" value="NM_001353564.1"/>
</dbReference>
<dbReference type="RefSeq" id="XP_005265236.1">
    <molecule id="Q01814-1"/>
    <property type="nucleotide sequence ID" value="XM_005265179.6"/>
</dbReference>
<dbReference type="RefSeq" id="XP_006713238.1">
    <molecule id="Q01814-1"/>
    <property type="nucleotide sequence ID" value="XM_006713175.5"/>
</dbReference>
<dbReference type="RefSeq" id="XP_011532054.1">
    <molecule id="Q01814-1"/>
    <property type="nucleotide sequence ID" value="XM_011533752.4"/>
</dbReference>
<dbReference type="RefSeq" id="XP_016861970.1">
    <molecule id="Q01814-1"/>
    <property type="nucleotide sequence ID" value="XM_017006481.3"/>
</dbReference>
<dbReference type="RefSeq" id="XP_016861971.1">
    <molecule id="Q01814-1"/>
    <property type="nucleotide sequence ID" value="XM_017006482.3"/>
</dbReference>
<dbReference type="RefSeq" id="XP_016861972.1">
    <molecule id="Q01814-8"/>
    <property type="nucleotide sequence ID" value="XM_017006483.3"/>
</dbReference>
<dbReference type="RefSeq" id="XP_016861973.1">
    <molecule id="Q01814-8"/>
    <property type="nucleotide sequence ID" value="XM_017006484.3"/>
</dbReference>
<dbReference type="RefSeq" id="XP_016861975.1">
    <property type="nucleotide sequence ID" value="XM_017006486.1"/>
</dbReference>
<dbReference type="RefSeq" id="XP_016861976.1">
    <molecule id="Q01814-6"/>
    <property type="nucleotide sequence ID" value="XM_017006487.2"/>
</dbReference>
<dbReference type="RefSeq" id="XP_016861978.1">
    <property type="nucleotide sequence ID" value="XM_017006489.1"/>
</dbReference>
<dbReference type="RefSeq" id="XP_047304154.1">
    <molecule id="Q01814-1"/>
    <property type="nucleotide sequence ID" value="XM_047448198.1"/>
</dbReference>
<dbReference type="RefSeq" id="XP_047304155.1">
    <molecule id="Q01814-1"/>
    <property type="nucleotide sequence ID" value="XM_047448199.1"/>
</dbReference>
<dbReference type="RefSeq" id="XP_054202618.1">
    <molecule id="Q01814-1"/>
    <property type="nucleotide sequence ID" value="XM_054346643.1"/>
</dbReference>
<dbReference type="RefSeq" id="XP_054202619.1">
    <molecule id="Q01814-1"/>
    <property type="nucleotide sequence ID" value="XM_054346644.1"/>
</dbReference>
<dbReference type="RefSeq" id="XP_054202620.1">
    <molecule id="Q01814-1"/>
    <property type="nucleotide sequence ID" value="XM_054346645.1"/>
</dbReference>
<dbReference type="RefSeq" id="XP_054202621.1">
    <molecule id="Q01814-1"/>
    <property type="nucleotide sequence ID" value="XM_054346646.1"/>
</dbReference>
<dbReference type="RefSeq" id="XP_054202622.1">
    <molecule id="Q01814-1"/>
    <property type="nucleotide sequence ID" value="XM_054346647.1"/>
</dbReference>
<dbReference type="RefSeq" id="XP_054202623.1">
    <molecule id="Q01814-1"/>
    <property type="nucleotide sequence ID" value="XM_054346648.1"/>
</dbReference>
<dbReference type="RefSeq" id="XP_054202624.1">
    <molecule id="Q01814-1"/>
    <property type="nucleotide sequence ID" value="XM_054346649.1"/>
</dbReference>
<dbReference type="RefSeq" id="XP_054202625.1">
    <molecule id="Q01814-8"/>
    <property type="nucleotide sequence ID" value="XM_054346650.1"/>
</dbReference>
<dbReference type="RefSeq" id="XP_054202626.1">
    <molecule id="Q01814-8"/>
    <property type="nucleotide sequence ID" value="XM_054346651.1"/>
</dbReference>
<dbReference type="RefSeq" id="XP_054202628.1">
    <molecule id="Q01814-6"/>
    <property type="nucleotide sequence ID" value="XM_054346653.1"/>
</dbReference>
<dbReference type="SMR" id="Q01814"/>
<dbReference type="BioGRID" id="106981">
    <property type="interactions" value="213"/>
</dbReference>
<dbReference type="ELM" id="Q01814"/>
<dbReference type="FunCoup" id="Q01814">
    <property type="interactions" value="2026"/>
</dbReference>
<dbReference type="IntAct" id="Q01814">
    <property type="interactions" value="177"/>
</dbReference>
<dbReference type="MINT" id="Q01814"/>
<dbReference type="STRING" id="9606.ENSP00000353414"/>
<dbReference type="DrugBank" id="DB01189">
    <property type="generic name" value="Desflurane"/>
</dbReference>
<dbReference type="DrugBank" id="DB01159">
    <property type="generic name" value="Halothane"/>
</dbReference>
<dbReference type="DrugBank" id="DB00867">
    <property type="generic name" value="Ritodrine"/>
</dbReference>
<dbReference type="DrugBank" id="DB01236">
    <property type="generic name" value="Sevoflurane"/>
</dbReference>
<dbReference type="TCDB" id="3.A.3.2.40">
    <property type="family name" value="the p-type atpase (p-atpase) superfamily"/>
</dbReference>
<dbReference type="GlyGen" id="Q01814">
    <property type="glycosylation" value="1 site, 1 N-linked glycan (1 site)"/>
</dbReference>
<dbReference type="iPTMnet" id="Q01814"/>
<dbReference type="PhosphoSitePlus" id="Q01814"/>
<dbReference type="SwissPalm" id="Q01814"/>
<dbReference type="BioMuta" id="ATP2B2"/>
<dbReference type="DMDM" id="14286115"/>
<dbReference type="jPOST" id="Q01814"/>
<dbReference type="MassIVE" id="Q01814"/>
<dbReference type="PaxDb" id="9606-ENSP00000353414"/>
<dbReference type="PeptideAtlas" id="Q01814"/>
<dbReference type="ProteomicsDB" id="57993">
    <molecule id="Q01814-1"/>
</dbReference>
<dbReference type="ProteomicsDB" id="57994">
    <molecule id="Q01814-2"/>
</dbReference>
<dbReference type="ProteomicsDB" id="57995">
    <molecule id="Q01814-3"/>
</dbReference>
<dbReference type="ProteomicsDB" id="57996">
    <molecule id="Q01814-4"/>
</dbReference>
<dbReference type="ProteomicsDB" id="57997">
    <molecule id="Q01814-5"/>
</dbReference>
<dbReference type="ProteomicsDB" id="57998">
    <molecule id="Q01814-6"/>
</dbReference>
<dbReference type="ProteomicsDB" id="57999">
    <molecule id="Q01814-7"/>
</dbReference>
<dbReference type="ProteomicsDB" id="58000">
    <molecule id="Q01814-8"/>
</dbReference>
<dbReference type="Antibodypedia" id="26012">
    <property type="antibodies" value="125 antibodies from 24 providers"/>
</dbReference>
<dbReference type="DNASU" id="491"/>
<dbReference type="Ensembl" id="ENST00000360273.7">
    <molecule id="Q01814-1"/>
    <property type="protein sequence ID" value="ENSP00000353414.2"/>
    <property type="gene ID" value="ENSG00000157087.20"/>
</dbReference>
<dbReference type="Ensembl" id="ENST00000397077.6">
    <molecule id="Q01814-6"/>
    <property type="protein sequence ID" value="ENSP00000380267.1"/>
    <property type="gene ID" value="ENSG00000157087.20"/>
</dbReference>
<dbReference type="Ensembl" id="ENST00000452124.2">
    <molecule id="Q01814-8"/>
    <property type="protein sequence ID" value="ENSP00000414854.2"/>
    <property type="gene ID" value="ENSG00000157087.20"/>
</dbReference>
<dbReference type="Ensembl" id="ENST00000460129.5">
    <molecule id="Q01814-4"/>
    <property type="protein sequence ID" value="ENSP00000424494.1"/>
    <property type="gene ID" value="ENSG00000157087.20"/>
</dbReference>
<dbReference type="Ensembl" id="ENST00000643662.1">
    <molecule id="Q01814-7"/>
    <property type="protein sequence ID" value="ENSP00000495924.1"/>
    <property type="gene ID" value="ENSG00000157087.20"/>
</dbReference>
<dbReference type="Ensembl" id="ENST00000644807.2">
    <molecule id="Q01814-4"/>
    <property type="protein sequence ID" value="ENSP00000495228.1"/>
    <property type="gene ID" value="ENSG00000157087.20"/>
</dbReference>
<dbReference type="Ensembl" id="ENST00000645850.1">
    <molecule id="Q01814-1"/>
    <property type="protein sequence ID" value="ENSP00000494716.1"/>
    <property type="gene ID" value="ENSG00000157087.20"/>
</dbReference>
<dbReference type="Ensembl" id="ENST00000646379.1">
    <molecule id="Q01814-6"/>
    <property type="protein sequence ID" value="ENSP00000494381.1"/>
    <property type="gene ID" value="ENSG00000157087.20"/>
</dbReference>
<dbReference type="GeneID" id="491"/>
<dbReference type="KEGG" id="hsa:491"/>
<dbReference type="MANE-Select" id="ENST00000360273.7">
    <property type="protein sequence ID" value="ENSP00000353414.2"/>
    <property type="RefSeq nucleotide sequence ID" value="NM_001001331.4"/>
    <property type="RefSeq protein sequence ID" value="NP_001001331.1"/>
</dbReference>
<dbReference type="UCSC" id="uc003bvt.3">
    <molecule id="Q01814-1"/>
    <property type="organism name" value="human"/>
</dbReference>
<dbReference type="AGR" id="HGNC:815"/>
<dbReference type="CTD" id="491"/>
<dbReference type="DisGeNET" id="491"/>
<dbReference type="GeneCards" id="ATP2B2"/>
<dbReference type="HGNC" id="HGNC:815">
    <property type="gene designation" value="ATP2B2"/>
</dbReference>
<dbReference type="HPA" id="ENSG00000157087">
    <property type="expression patterns" value="Tissue enhanced (brain, choroid plexus, salivary gland, skeletal muscle)"/>
</dbReference>
<dbReference type="MalaCards" id="ATP2B2"/>
<dbReference type="MIM" id="108733">
    <property type="type" value="gene"/>
</dbReference>
<dbReference type="MIM" id="619804">
    <property type="type" value="phenotype"/>
</dbReference>
<dbReference type="neXtProt" id="NX_Q01814"/>
<dbReference type="OpenTargets" id="ENSG00000157087"/>
<dbReference type="Orphanet" id="90636">
    <property type="disease" value="Rare autosomal recessive non-syndromic sensorineural deafness type DFNB"/>
</dbReference>
<dbReference type="PharmGKB" id="PA25108"/>
<dbReference type="VEuPathDB" id="HostDB:ENSG00000157087"/>
<dbReference type="eggNOG" id="KOG0204">
    <property type="taxonomic scope" value="Eukaryota"/>
</dbReference>
<dbReference type="GeneTree" id="ENSGT00940000161461"/>
<dbReference type="HOGENOM" id="CLU_002360_9_0_1"/>
<dbReference type="InParanoid" id="Q01814"/>
<dbReference type="OMA" id="ISIPWGA"/>
<dbReference type="OrthoDB" id="116380at2759"/>
<dbReference type="PAN-GO" id="Q01814">
    <property type="GO annotations" value="6 GO annotations based on evolutionary models"/>
</dbReference>
<dbReference type="PhylomeDB" id="Q01814"/>
<dbReference type="TreeFam" id="TF300330"/>
<dbReference type="BRENDA" id="7.2.2.10">
    <property type="organism ID" value="2681"/>
</dbReference>
<dbReference type="PathwayCommons" id="Q01814"/>
<dbReference type="Reactome" id="R-HSA-418359">
    <property type="pathway name" value="Reduction of cytosolic Ca++ levels"/>
</dbReference>
<dbReference type="Reactome" id="R-HSA-5578775">
    <property type="pathway name" value="Ion homeostasis"/>
</dbReference>
<dbReference type="Reactome" id="R-HSA-936837">
    <property type="pathway name" value="Ion transport by P-type ATPases"/>
</dbReference>
<dbReference type="Reactome" id="R-HSA-9662360">
    <molecule id="Q01814-2"/>
    <property type="pathway name" value="Sensory processing of sound by inner hair cells of the cochlea"/>
</dbReference>
<dbReference type="Reactome" id="R-HSA-9662361">
    <molecule id="Q01814-2"/>
    <property type="pathway name" value="Sensory processing of sound by outer hair cells of the cochlea"/>
</dbReference>
<dbReference type="SignaLink" id="Q01814"/>
<dbReference type="SIGNOR" id="Q01814"/>
<dbReference type="BioGRID-ORCS" id="491">
    <property type="hits" value="9 hits in 1142 CRISPR screens"/>
</dbReference>
<dbReference type="CD-CODE" id="91857CE7">
    <property type="entry name" value="Nucleolus"/>
</dbReference>
<dbReference type="CD-CODE" id="FB4E32DD">
    <property type="entry name" value="Presynaptic clusters and postsynaptic densities"/>
</dbReference>
<dbReference type="ChiTaRS" id="ATP2B2">
    <property type="organism name" value="human"/>
</dbReference>
<dbReference type="GeneWiki" id="ATP2B2"/>
<dbReference type="GenomeRNAi" id="491"/>
<dbReference type="Pharos" id="Q01814">
    <property type="development level" value="Tbio"/>
</dbReference>
<dbReference type="PRO" id="PR:Q01814"/>
<dbReference type="Proteomes" id="UP000005640">
    <property type="component" value="Chromosome 3"/>
</dbReference>
<dbReference type="RNAct" id="Q01814">
    <property type="molecule type" value="protein"/>
</dbReference>
<dbReference type="Bgee" id="ENSG00000157087">
    <property type="expression patterns" value="Expressed in lateral nuclear group of thalamus and 150 other cell types or tissues"/>
</dbReference>
<dbReference type="ExpressionAtlas" id="Q01814">
    <property type="expression patterns" value="baseline and differential"/>
</dbReference>
<dbReference type="GO" id="GO:0016324">
    <property type="term" value="C:apical plasma membrane"/>
    <property type="evidence" value="ECO:0007669"/>
    <property type="project" value="UniProtKB-SubCell"/>
</dbReference>
<dbReference type="GO" id="GO:0016323">
    <property type="term" value="C:basolateral plasma membrane"/>
    <property type="evidence" value="ECO:0007669"/>
    <property type="project" value="UniProtKB-SubCell"/>
</dbReference>
<dbReference type="GO" id="GO:0005737">
    <property type="term" value="C:cytoplasm"/>
    <property type="evidence" value="ECO:0000314"/>
    <property type="project" value="UniProtKB"/>
</dbReference>
<dbReference type="GO" id="GO:0032591">
    <property type="term" value="C:dendritic spine membrane"/>
    <property type="evidence" value="ECO:0000250"/>
    <property type="project" value="UniProtKB"/>
</dbReference>
<dbReference type="GO" id="GO:0070062">
    <property type="term" value="C:extracellular exosome"/>
    <property type="evidence" value="ECO:0007005"/>
    <property type="project" value="UniProtKB"/>
</dbReference>
<dbReference type="GO" id="GO:0098982">
    <property type="term" value="C:GABA-ergic synapse"/>
    <property type="evidence" value="ECO:0000314"/>
    <property type="project" value="SynGO"/>
</dbReference>
<dbReference type="GO" id="GO:0098978">
    <property type="term" value="C:glutamatergic synapse"/>
    <property type="evidence" value="ECO:0000314"/>
    <property type="project" value="SynGO"/>
</dbReference>
<dbReference type="GO" id="GO:0043231">
    <property type="term" value="C:intracellular membrane-bounded organelle"/>
    <property type="evidence" value="ECO:0000318"/>
    <property type="project" value="GO_Central"/>
</dbReference>
<dbReference type="GO" id="GO:0005886">
    <property type="term" value="C:plasma membrane"/>
    <property type="evidence" value="ECO:0000314"/>
    <property type="project" value="UniProtKB"/>
</dbReference>
<dbReference type="GO" id="GO:0098839">
    <property type="term" value="C:postsynaptic density membrane"/>
    <property type="evidence" value="ECO:0000318"/>
    <property type="project" value="GO_Central"/>
</dbReference>
<dbReference type="GO" id="GO:0005524">
    <property type="term" value="F:ATP binding"/>
    <property type="evidence" value="ECO:0000314"/>
    <property type="project" value="UniProtKB"/>
</dbReference>
<dbReference type="GO" id="GO:0016887">
    <property type="term" value="F:ATP hydrolysis activity"/>
    <property type="evidence" value="ECO:0007669"/>
    <property type="project" value="InterPro"/>
</dbReference>
<dbReference type="GO" id="GO:0005509">
    <property type="term" value="F:calcium ion binding"/>
    <property type="evidence" value="ECO:0000314"/>
    <property type="project" value="UniProtKB"/>
</dbReference>
<dbReference type="GO" id="GO:0005516">
    <property type="term" value="F:calmodulin binding"/>
    <property type="evidence" value="ECO:0000314"/>
    <property type="project" value="UniProtKB"/>
</dbReference>
<dbReference type="GO" id="GO:0046872">
    <property type="term" value="F:metal ion binding"/>
    <property type="evidence" value="ECO:0007669"/>
    <property type="project" value="UniProtKB-KW"/>
</dbReference>
<dbReference type="GO" id="GO:0005388">
    <property type="term" value="F:P-type calcium transporter activity"/>
    <property type="evidence" value="ECO:0000314"/>
    <property type="project" value="UniProtKB"/>
</dbReference>
<dbReference type="GO" id="GO:1905059">
    <property type="term" value="F:P-type calcium transporter activity involved in regulation of postsynaptic cytosolic calcium ion concentration"/>
    <property type="evidence" value="ECO:0000314"/>
    <property type="project" value="SynGO"/>
</dbReference>
<dbReference type="GO" id="GO:0030165">
    <property type="term" value="F:PDZ domain binding"/>
    <property type="evidence" value="ECO:0000314"/>
    <property type="project" value="UniProtKB"/>
</dbReference>
<dbReference type="GO" id="GO:0006816">
    <property type="term" value="P:calcium ion transport"/>
    <property type="evidence" value="ECO:0000315"/>
    <property type="project" value="DFLAT"/>
</dbReference>
<dbReference type="GO" id="GO:0034220">
    <property type="term" value="P:monoatomic ion transmembrane transport"/>
    <property type="evidence" value="ECO:0000304"/>
    <property type="project" value="Reactome"/>
</dbReference>
<dbReference type="GO" id="GO:0030182">
    <property type="term" value="P:neuron differentiation"/>
    <property type="evidence" value="ECO:0000314"/>
    <property type="project" value="UniProtKB"/>
</dbReference>
<dbReference type="GO" id="GO:1903779">
    <property type="term" value="P:regulation of cardiac conduction"/>
    <property type="evidence" value="ECO:0000304"/>
    <property type="project" value="Reactome"/>
</dbReference>
<dbReference type="GO" id="GO:0051480">
    <property type="term" value="P:regulation of cytosolic calcium ion concentration"/>
    <property type="evidence" value="ECO:0000315"/>
    <property type="project" value="DFLAT"/>
</dbReference>
<dbReference type="GO" id="GO:0007605">
    <property type="term" value="P:sensory perception of sound"/>
    <property type="evidence" value="ECO:0000315"/>
    <property type="project" value="UniProtKB"/>
</dbReference>
<dbReference type="CDD" id="cd02081">
    <property type="entry name" value="P-type_ATPase_Ca_PMCA-like"/>
    <property type="match status" value="1"/>
</dbReference>
<dbReference type="FunFam" id="1.20.1110.10:FF:000001">
    <property type="entry name" value="Calcium-transporting ATPase"/>
    <property type="match status" value="1"/>
</dbReference>
<dbReference type="FunFam" id="1.20.1110.10:FF:000002">
    <property type="entry name" value="Calcium-transporting ATPase"/>
    <property type="match status" value="1"/>
</dbReference>
<dbReference type="FunFam" id="1.20.1110.10:FF:000008">
    <property type="entry name" value="Calcium-transporting ATPase"/>
    <property type="match status" value="1"/>
</dbReference>
<dbReference type="FunFam" id="2.70.150.10:FF:000001">
    <property type="entry name" value="Calcium-transporting ATPase"/>
    <property type="match status" value="1"/>
</dbReference>
<dbReference type="FunFam" id="3.40.1110.10:FF:000032">
    <property type="entry name" value="Calcium-transporting ATPase"/>
    <property type="match status" value="1"/>
</dbReference>
<dbReference type="FunFam" id="3.40.50.1000:FF:000007">
    <property type="entry name" value="Calcium-transporting ATPase"/>
    <property type="match status" value="1"/>
</dbReference>
<dbReference type="Gene3D" id="3.40.1110.10">
    <property type="entry name" value="Calcium-transporting ATPase, cytoplasmic domain N"/>
    <property type="match status" value="1"/>
</dbReference>
<dbReference type="Gene3D" id="2.70.150.10">
    <property type="entry name" value="Calcium-transporting ATPase, cytoplasmic transduction domain A"/>
    <property type="match status" value="1"/>
</dbReference>
<dbReference type="Gene3D" id="1.20.1110.10">
    <property type="entry name" value="Calcium-transporting ATPase, transmembrane domain"/>
    <property type="match status" value="2"/>
</dbReference>
<dbReference type="Gene3D" id="3.40.50.1000">
    <property type="entry name" value="HAD superfamily/HAD-like"/>
    <property type="match status" value="1"/>
</dbReference>
<dbReference type="InterPro" id="IPR022141">
    <property type="entry name" value="ATP_Ca_trans_C"/>
</dbReference>
<dbReference type="InterPro" id="IPR006068">
    <property type="entry name" value="ATPase_P-typ_cation-transptr_C"/>
</dbReference>
<dbReference type="InterPro" id="IPR004014">
    <property type="entry name" value="ATPase_P-typ_cation-transptr_N"/>
</dbReference>
<dbReference type="InterPro" id="IPR023299">
    <property type="entry name" value="ATPase_P-typ_cyto_dom_N"/>
</dbReference>
<dbReference type="InterPro" id="IPR018303">
    <property type="entry name" value="ATPase_P-typ_P_site"/>
</dbReference>
<dbReference type="InterPro" id="IPR023298">
    <property type="entry name" value="ATPase_P-typ_TM_dom_sf"/>
</dbReference>
<dbReference type="InterPro" id="IPR008250">
    <property type="entry name" value="ATPase_P-typ_transduc_dom_A_sf"/>
</dbReference>
<dbReference type="InterPro" id="IPR036412">
    <property type="entry name" value="HAD-like_sf"/>
</dbReference>
<dbReference type="InterPro" id="IPR023214">
    <property type="entry name" value="HAD_sf"/>
</dbReference>
<dbReference type="InterPro" id="IPR006408">
    <property type="entry name" value="P-type_ATPase_IIB"/>
</dbReference>
<dbReference type="InterPro" id="IPR001757">
    <property type="entry name" value="P_typ_ATPase"/>
</dbReference>
<dbReference type="InterPro" id="IPR044492">
    <property type="entry name" value="P_typ_ATPase_HD_dom"/>
</dbReference>
<dbReference type="NCBIfam" id="TIGR01517">
    <property type="entry name" value="ATPase-IIB_Ca"/>
    <property type="match status" value="1"/>
</dbReference>
<dbReference type="NCBIfam" id="TIGR01494">
    <property type="entry name" value="ATPase_P-type"/>
    <property type="match status" value="3"/>
</dbReference>
<dbReference type="PANTHER" id="PTHR24093">
    <property type="entry name" value="CATION TRANSPORTING ATPASE"/>
    <property type="match status" value="1"/>
</dbReference>
<dbReference type="PANTHER" id="PTHR24093:SF377">
    <property type="entry name" value="PLASMA MEMBRANE CALCIUM-TRANSPORTING ATPASE 2"/>
    <property type="match status" value="1"/>
</dbReference>
<dbReference type="Pfam" id="PF12424">
    <property type="entry name" value="ATP_Ca_trans_C"/>
    <property type="match status" value="1"/>
</dbReference>
<dbReference type="Pfam" id="PF13246">
    <property type="entry name" value="Cation_ATPase"/>
    <property type="match status" value="1"/>
</dbReference>
<dbReference type="Pfam" id="PF00689">
    <property type="entry name" value="Cation_ATPase_C"/>
    <property type="match status" value="1"/>
</dbReference>
<dbReference type="Pfam" id="PF00690">
    <property type="entry name" value="Cation_ATPase_N"/>
    <property type="match status" value="1"/>
</dbReference>
<dbReference type="Pfam" id="PF00122">
    <property type="entry name" value="E1-E2_ATPase"/>
    <property type="match status" value="2"/>
</dbReference>
<dbReference type="Pfam" id="PF00702">
    <property type="entry name" value="Hydrolase"/>
    <property type="match status" value="1"/>
</dbReference>
<dbReference type="PRINTS" id="PR00119">
    <property type="entry name" value="CATATPASE"/>
</dbReference>
<dbReference type="PRINTS" id="PR00121">
    <property type="entry name" value="NAKATPASE"/>
</dbReference>
<dbReference type="SFLD" id="SFLDS00003">
    <property type="entry name" value="Haloacid_Dehalogenase"/>
    <property type="match status" value="1"/>
</dbReference>
<dbReference type="SFLD" id="SFLDF00027">
    <property type="entry name" value="p-type_atpase"/>
    <property type="match status" value="1"/>
</dbReference>
<dbReference type="SMART" id="SM00831">
    <property type="entry name" value="Cation_ATPase_N"/>
    <property type="match status" value="1"/>
</dbReference>
<dbReference type="SUPFAM" id="SSF81653">
    <property type="entry name" value="Calcium ATPase, transduction domain A"/>
    <property type="match status" value="1"/>
</dbReference>
<dbReference type="SUPFAM" id="SSF81665">
    <property type="entry name" value="Calcium ATPase, transmembrane domain M"/>
    <property type="match status" value="1"/>
</dbReference>
<dbReference type="SUPFAM" id="SSF56784">
    <property type="entry name" value="HAD-like"/>
    <property type="match status" value="1"/>
</dbReference>
<dbReference type="SUPFAM" id="SSF81660">
    <property type="entry name" value="Metal cation-transporting ATPase, ATP-binding domain N"/>
    <property type="match status" value="1"/>
</dbReference>
<dbReference type="PROSITE" id="PS00154">
    <property type="entry name" value="ATPASE_E1_E2"/>
    <property type="match status" value="1"/>
</dbReference>
<protein>
    <recommendedName>
        <fullName>Plasma membrane calcium-transporting ATPase 2</fullName>
        <shortName evidence="14">PMCA2</shortName>
        <ecNumber evidence="8 9">7.2.2.10</ecNumber>
    </recommendedName>
    <alternativeName>
        <fullName>Plasma membrane calcium ATPase isoform 2</fullName>
    </alternativeName>
    <alternativeName>
        <fullName>Plasma membrane calcium pump isoform 2</fullName>
    </alternativeName>
</protein>
<reference key="1">
    <citation type="journal article" date="1992" name="Genomics">
        <title>Determination of the nucleotide sequence and chromosomal localization of the ATP2B2 gene encoding human Ca(2+)-pumping ATPase isoform PMCA2.</title>
        <authorList>
            <person name="Brandt P."/>
            <person name="Ibrahim E."/>
            <person name="Bruns G.A.P."/>
            <person name="Neve R.L."/>
        </authorList>
    </citation>
    <scope>NUCLEOTIDE SEQUENCE [MRNA] (ISOFORM ZB)</scope>
    <source>
        <tissue>Brain</tissue>
    </source>
</reference>
<reference key="2">
    <citation type="journal article" date="1993" name="Cancer Res.">
        <title>von Hippel-Lindau syndrome: cloning and identification of the plasma membrane Ca(++)-transporting ATPase isoform 2 gene that resides in the von Hippel-Lindau gene region.</title>
        <authorList>
            <person name="Latif F."/>
            <person name="Duh F.-M."/>
            <person name="Gnarra J."/>
            <person name="Tory K."/>
            <person name="Kuzmin I."/>
            <person name="Yao M."/>
            <person name="Stackhouse T."/>
            <person name="Modi W."/>
            <person name="Geil L."/>
            <person name="Schmidt L."/>
            <person name="Li H."/>
            <person name="Orcutt M.L."/>
            <person name="Maher E."/>
            <person name="Richards F."/>
            <person name="Phipps M."/>
            <person name="Ferguson-Smith M."/>
            <person name="le Paslier D."/>
            <person name="Linehan W.M."/>
            <person name="Zbar B."/>
            <person name="Lerman M.I."/>
        </authorList>
    </citation>
    <scope>NUCLEOTIDE SEQUENCE [MRNA] (ISOFORM ZB)</scope>
    <scope>ALTERNATIVE SPLICING</scope>
</reference>
<reference key="3">
    <citation type="journal article" date="1992" name="Eur. J. Biochem.">
        <title>Microdiversity of human-plasma-membrane calcium-pump isoform 2 generated by alternative RNA splicing in the N-terminal coding region.</title>
        <authorList>
            <person name="Heim R."/>
            <person name="Hug M."/>
            <person name="Iwata T."/>
            <person name="Strehler E.E."/>
            <person name="Carafoli E."/>
        </authorList>
    </citation>
    <scope>NUCLEOTIDE SEQUENCE [MRNA] (ISOFORM WB)</scope>
    <scope>ALTERNATIVE SPLICING</scope>
    <source>
        <tissue>Brain</tissue>
        <tissue>Skeletal muscle</tissue>
    </source>
</reference>
<reference key="4">
    <citation type="journal article" date="2006" name="Nature">
        <title>The DNA sequence, annotation and analysis of human chromosome 3.</title>
        <authorList>
            <person name="Muzny D.M."/>
            <person name="Scherer S.E."/>
            <person name="Kaul R."/>
            <person name="Wang J."/>
            <person name="Yu J."/>
            <person name="Sudbrak R."/>
            <person name="Buhay C.J."/>
            <person name="Chen R."/>
            <person name="Cree A."/>
            <person name="Ding Y."/>
            <person name="Dugan-Rocha S."/>
            <person name="Gill R."/>
            <person name="Gunaratne P."/>
            <person name="Harris R.A."/>
            <person name="Hawes A.C."/>
            <person name="Hernandez J."/>
            <person name="Hodgson A.V."/>
            <person name="Hume J."/>
            <person name="Jackson A."/>
            <person name="Khan Z.M."/>
            <person name="Kovar-Smith C."/>
            <person name="Lewis L.R."/>
            <person name="Lozado R.J."/>
            <person name="Metzker M.L."/>
            <person name="Milosavljevic A."/>
            <person name="Miner G.R."/>
            <person name="Morgan M.B."/>
            <person name="Nazareth L.V."/>
            <person name="Scott G."/>
            <person name="Sodergren E."/>
            <person name="Song X.-Z."/>
            <person name="Steffen D."/>
            <person name="Wei S."/>
            <person name="Wheeler D.A."/>
            <person name="Wright M.W."/>
            <person name="Worley K.C."/>
            <person name="Yuan Y."/>
            <person name="Zhang Z."/>
            <person name="Adams C.Q."/>
            <person name="Ansari-Lari M.A."/>
            <person name="Ayele M."/>
            <person name="Brown M.J."/>
            <person name="Chen G."/>
            <person name="Chen Z."/>
            <person name="Clendenning J."/>
            <person name="Clerc-Blankenburg K.P."/>
            <person name="Chen R."/>
            <person name="Chen Z."/>
            <person name="Davis C."/>
            <person name="Delgado O."/>
            <person name="Dinh H.H."/>
            <person name="Dong W."/>
            <person name="Draper H."/>
            <person name="Ernst S."/>
            <person name="Fu G."/>
            <person name="Gonzalez-Garay M.L."/>
            <person name="Garcia D.K."/>
            <person name="Gillett W."/>
            <person name="Gu J."/>
            <person name="Hao B."/>
            <person name="Haugen E."/>
            <person name="Havlak P."/>
            <person name="He X."/>
            <person name="Hennig S."/>
            <person name="Hu S."/>
            <person name="Huang W."/>
            <person name="Jackson L.R."/>
            <person name="Jacob L.S."/>
            <person name="Kelly S.H."/>
            <person name="Kube M."/>
            <person name="Levy R."/>
            <person name="Li Z."/>
            <person name="Liu B."/>
            <person name="Liu J."/>
            <person name="Liu W."/>
            <person name="Lu J."/>
            <person name="Maheshwari M."/>
            <person name="Nguyen B.-V."/>
            <person name="Okwuonu G.O."/>
            <person name="Palmeiri A."/>
            <person name="Pasternak S."/>
            <person name="Perez L.M."/>
            <person name="Phelps K.A."/>
            <person name="Plopper F.J."/>
            <person name="Qiang B."/>
            <person name="Raymond C."/>
            <person name="Rodriguez R."/>
            <person name="Saenphimmachak C."/>
            <person name="Santibanez J."/>
            <person name="Shen H."/>
            <person name="Shen Y."/>
            <person name="Subramanian S."/>
            <person name="Tabor P.E."/>
            <person name="Verduzco D."/>
            <person name="Waldron L."/>
            <person name="Wang J."/>
            <person name="Wang J."/>
            <person name="Wang Q."/>
            <person name="Williams G.A."/>
            <person name="Wong G.K.-S."/>
            <person name="Yao Z."/>
            <person name="Zhang J."/>
            <person name="Zhang X."/>
            <person name="Zhao G."/>
            <person name="Zhou J."/>
            <person name="Zhou Y."/>
            <person name="Nelson D."/>
            <person name="Lehrach H."/>
            <person name="Reinhardt R."/>
            <person name="Naylor S.L."/>
            <person name="Yang H."/>
            <person name="Olson M."/>
            <person name="Weinstock G."/>
            <person name="Gibbs R.A."/>
        </authorList>
    </citation>
    <scope>NUCLEOTIDE SEQUENCE [LARGE SCALE GENOMIC DNA]</scope>
</reference>
<reference key="5">
    <citation type="journal article" date="1993" name="J. Biol. Chem.">
        <title>Quantitative analysis of alternative splicing options of human plasma membrane calcium pump genes.</title>
        <authorList>
            <person name="Stauffer T.P."/>
            <person name="Hilfiker H."/>
            <person name="Carafoli E."/>
            <person name="Strehler E.E."/>
        </authorList>
    </citation>
    <scope>PARTIAL NUCLEOTIDE SEQUENCE [MRNA] (ISOFORMS WA; YA AND ZA)</scope>
    <scope>TISSUE SPECIFICITY</scope>
    <source>
        <tissue>Brain cortex</tissue>
    </source>
</reference>
<reference key="6">
    <citation type="journal article" date="1994" name="J. Biol. Chem.">
        <authorList>
            <person name="Stauffer T.P."/>
            <person name="Hilfiker H."/>
            <person name="Carafoli E."/>
            <person name="Strehler E.E."/>
        </authorList>
    </citation>
    <scope>ERRATUM OF PUBMED:8245032</scope>
</reference>
<reference key="7">
    <citation type="journal article" date="2003" name="Ann. N. Y. Acad. Sci.">
        <title>Characterization of PISP, a novel single-PDZ protein that binds to all plasma membrane Ca2+-ATPase b-splice variants.</title>
        <authorList>
            <person name="Goellner G.M."/>
            <person name="DeMarco S.J."/>
            <person name="Strehler E.E."/>
        </authorList>
    </citation>
    <scope>INTERACTION WITH PDZD11</scope>
</reference>
<reference key="8">
    <citation type="journal article" date="2003" name="J. Biol. Chem.">
        <title>Alternative splicing of the first intracellular loop of plasma membrane Ca2+-ATPase isoform 2 alters its membrane targeting.</title>
        <authorList>
            <person name="Chicka M.C."/>
            <person name="Strehler E.E."/>
        </authorList>
    </citation>
    <scope>SUBCELLULAR LOCATION (ISOFORMS WA; WB; XB; ZA AND ZB)</scope>
</reference>
<reference key="9">
    <citation type="journal article" date="2008" name="Proc. Natl. Acad. Sci. U.S.A.">
        <title>A quantitative atlas of mitotic phosphorylation.</title>
        <authorList>
            <person name="Dephoure N."/>
            <person name="Zhou C."/>
            <person name="Villen J."/>
            <person name="Beausoleil S.A."/>
            <person name="Bakalarski C.E."/>
            <person name="Elledge S.J."/>
            <person name="Gygi S.P."/>
        </authorList>
    </citation>
    <scope>PHOSPHORYLATION [LARGE SCALE ANALYSIS] AT SER-1177 (ISOFORM WA)</scope>
    <scope>PHOSPHORYLATION [LARGE SCALE ANALYSIS] AT SER-1146 (ISOFORM XA)</scope>
    <scope>PHOSPHORYLATION [LARGE SCALE ANALYSIS] AT SER-1163 (ISOFORM YA)</scope>
    <scope>PHOSPHORYLATION [LARGE SCALE ANALYSIS] AT SER-1132 (ISOFORM ZA)</scope>
    <scope>IDENTIFICATION BY MASS SPECTROMETRY [LARGE SCALE ANALYSIS]</scope>
    <source>
        <tissue>Cervix carcinoma</tissue>
    </source>
</reference>
<reference key="10">
    <citation type="journal article" date="2014" name="J. Proteomics">
        <title>An enzyme assisted RP-RPLC approach for in-depth analysis of human liver phosphoproteome.</title>
        <authorList>
            <person name="Bian Y."/>
            <person name="Song C."/>
            <person name="Cheng K."/>
            <person name="Dong M."/>
            <person name="Wang F."/>
            <person name="Huang J."/>
            <person name="Sun D."/>
            <person name="Wang L."/>
            <person name="Ye M."/>
            <person name="Zou H."/>
        </authorList>
    </citation>
    <scope>PHOSPHORYLATION [LARGE SCALE ANALYSIS] AT SER-1211</scope>
    <scope>PHOSPHORYLATION [LARGE SCALE ANALYSIS] AT SER-1165 (ISOFORM WA)</scope>
    <scope>PHOSPHORYLATION [LARGE SCALE ANALYSIS] AT SER-1134 (ISOFORM XA)</scope>
    <scope>PHOSPHORYLATION [LARGE SCALE ANALYSIS] AT SER-1151 (ISOFORM YA)</scope>
    <scope>PHOSPHORYLATION [LARGE SCALE ANALYSIS] AT SER-1120 (ISOFORM ZA)</scope>
    <scope>IDENTIFICATION BY MASS SPECTROMETRY [LARGE SCALE ANALYSIS]</scope>
    <source>
        <tissue>Liver</tissue>
    </source>
</reference>
<reference key="11">
    <citation type="journal article" date="2015" name="Sci. Signal.">
        <title>Plasma membrane Ca2+-ATPases can shape the pattern of Ca2+ transients induced by store-operated C2+ entry.</title>
        <authorList>
            <person name="Paszty K."/>
            <person name="Caride A.J."/>
            <person name="Bajzer Z."/>
            <person name="Offord C.P."/>
            <person name="Padanyi R."/>
            <person name="Hegedus L."/>
            <person name="Varga K."/>
            <person name="Strehler E.E."/>
            <person name="Enyedi A."/>
        </authorList>
    </citation>
    <scope>FUNCTION</scope>
</reference>
<reference key="12">
    <citation type="journal article" date="2005" name="N. Engl. J. Med.">
        <title>Modification of human hearing loss by plasma-membrane calcium pump PMCA2.</title>
        <authorList>
            <person name="Schultz J.M."/>
            <person name="Yang Y."/>
            <person name="Caride A.J."/>
            <person name="Filoteo A.G."/>
            <person name="Penheiter A.R."/>
            <person name="Lagziel A."/>
            <person name="Morell R.J."/>
            <person name="Mohiddin S.A."/>
            <person name="Fananapazir L."/>
            <person name="Madeo A.C."/>
            <person name="Penniston J.T."/>
            <person name="Griffith A.J."/>
        </authorList>
    </citation>
    <scope>CHARACTERIZATION OF VARIANT MET-631</scope>
    <scope>FUNCTION</scope>
    <scope>CATALYTIC ACTIVITY</scope>
    <scope>ACTIVITY REGULATION</scope>
</reference>
<reference key="13">
    <citation type="journal article" date="2007" name="Proc. Natl. Acad. Sci. U.S.A.">
        <title>A functional study of plasma-membrane calcium-pump isoform 2 mutants causing digenic deafness.</title>
        <authorList>
            <person name="Ficarella R."/>
            <person name="Di Leva F."/>
            <person name="Bortolozzi M."/>
            <person name="Ortolano S."/>
            <person name="Donaudy F."/>
            <person name="Petrillo M."/>
            <person name="Melchionda S."/>
            <person name="Lelli A."/>
            <person name="Domi T."/>
            <person name="Fedrizzi L."/>
            <person name="Lim D."/>
            <person name="Shull G.E."/>
            <person name="Gasparini P."/>
            <person name="Brini M."/>
            <person name="Mammano F."/>
            <person name="Carafoli E."/>
        </authorList>
    </citation>
    <scope>CHARACTERIZATION OF VARIANT SER-293</scope>
    <scope>FUNCTION</scope>
    <scope>CATALYTIC ACTIVITY</scope>
    <scope>SUBCELLULAR LOCATION</scope>
</reference>
<reference key="14">
    <citation type="journal article" date="2019" name="Hum. Genet.">
        <title>De novo and inherited loss-of-function variants of ATP2B2 are associated with rapidly progressive hearing impairment.</title>
        <authorList>
            <consortium name="DOOFNL Consortium"/>
            <person name="Smits J.J."/>
            <person name="Oostrik J."/>
            <person name="Beynon A.J."/>
            <person name="Kant S.G."/>
            <person name="de Koning Gans P.A.M."/>
            <person name="Rotteveel L.J.C."/>
            <person name="Klein Wassink-Ruiter J.S."/>
            <person name="Free R.H."/>
            <person name="Maas S.M."/>
            <person name="van de Kamp J."/>
            <person name="Merkus P."/>
            <person name="Koole W."/>
            <person name="Feenstra I."/>
            <person name="Admiraal R.J.C."/>
            <person name="Lanting C.P."/>
            <person name="Schraders M."/>
            <person name="Yntema H.G."/>
            <person name="Pennings R.J.E."/>
            <person name="Kremer H."/>
        </authorList>
    </citation>
    <scope>VARIANTS DFNA82 655-GLU--LEU-1243 DEL; 666-CYS--LEU-1243 DEL AND 777-ARG--LEU-1243 DEL</scope>
    <scope>INVOLVEMENT IN DFNA82</scope>
</reference>
<comment type="function">
    <text evidence="3 8 9 10">ATP-driven Ca(2+) ion pump involved in the maintenance of basal intracellular Ca(2+) levels in specialized cells of cerebellar circuit and vestibular and cochlear systems (PubMed:15829536, PubMed:17234811). Uses ATP as an energy source to transport cytosolic Ca(2+) ions across the plasma membrane to the extracellular compartment (PubMed:15829536, PubMed:17234811). Has fast activation and Ca(2+) clearance rate suited to control fast neuronal Ca(2+) dynamics. At parallel fiber to Purkinje neuron synapse, mediates presynaptic Ca(2+) efflux in response to climbing fiber-induced Ca(2+) rise. Provides for fast return of Ca(2+) concentrations back to their resting levels, ultimately contributing to long-term depression induction and motor learning (By similarity). Plays an essential role in hearing and balance (PubMed:15829536, PubMed:17234811). In cochlear hair cells, shuttles Ca(2+) ions from stereocilia to the endolymph and dissipates Ca(2+) transients generated by the opening of the mechanoelectrical transduction channels. Regulates Ca(2+) levels in the vestibular system, where it contributes to the formation of otoconia (PubMed:15829536, PubMed:17234811). In non-excitable cells, regulates Ca(2+) signaling through spatial control of Ca(2+) ions extrusion and dissipation of Ca(2+) transients generated by store-operated channels (PubMed:25690014). In lactating mammary gland, allows for the high content of Ca(2+) ions in the milk (By similarity).</text>
</comment>
<comment type="catalytic activity">
    <reaction evidence="8 9">
        <text>Ca(2+)(in) + ATP + H2O = Ca(2+)(out) + ADP + phosphate + H(+)</text>
        <dbReference type="Rhea" id="RHEA:18105"/>
        <dbReference type="ChEBI" id="CHEBI:15377"/>
        <dbReference type="ChEBI" id="CHEBI:15378"/>
        <dbReference type="ChEBI" id="CHEBI:29108"/>
        <dbReference type="ChEBI" id="CHEBI:30616"/>
        <dbReference type="ChEBI" id="CHEBI:43474"/>
        <dbReference type="ChEBI" id="CHEBI:456216"/>
        <dbReference type="EC" id="7.2.2.10"/>
    </reaction>
    <physiologicalReaction direction="left-to-right" evidence="17 18">
        <dbReference type="Rhea" id="RHEA:18106"/>
    </physiologicalReaction>
</comment>
<comment type="activity regulation">
    <text evidence="8">Up-regulated by calmodulin which increases the affinity of the pump for Ca(2+) ions.</text>
</comment>
<comment type="subunit">
    <text evidence="7">Interacts with PDZD11.</text>
</comment>
<comment type="interaction">
    <interactant intactId="EBI-1174243">
        <id>Q01814</id>
    </interactant>
    <interactant intactId="EBI-1018474">
        <id>P01258</id>
        <label>CALCA</label>
    </interactant>
    <organismsDiffer>false</organismsDiffer>
    <experiments>2</experiments>
</comment>
<comment type="interaction">
    <interactant intactId="EBI-1174243">
        <id>Q01814</id>
    </interactant>
    <interactant intactId="EBI-357345">
        <id>Q14160</id>
        <label>SCRIB</label>
    </interactant>
    <organismsDiffer>false</organismsDiffer>
    <experiments>2</experiments>
</comment>
<comment type="interaction">
    <interactant intactId="EBI-1174262">
        <id>Q01814-1</id>
    </interactant>
    <interactant intactId="EBI-396947">
        <id>Q63622</id>
        <label>Dlg2</label>
    </interactant>
    <organismsDiffer>true</organismsDiffer>
    <experiments>2</experiments>
</comment>
<comment type="interaction">
    <interactant intactId="EBI-1174262">
        <id>Q01814-1</id>
    </interactant>
    <interactant intactId="EBI-1174758">
        <id>Q8SQG9</id>
        <label>NHERF2</label>
    </interactant>
    <organismsDiffer>true</organismsDiffer>
    <experiments>3</experiments>
</comment>
<comment type="subcellular location">
    <subcellularLocation>
        <location evidence="9">Cell membrane</location>
        <topology evidence="4">Multi-pass membrane protein</topology>
    </subcellularLocation>
    <subcellularLocation>
        <location evidence="3">Synapse</location>
    </subcellularLocation>
</comment>
<comment type="subcellular location">
    <molecule>Isoform WA</molecule>
    <subcellularLocation>
        <location evidence="6">Apical cell membrane</location>
        <topology evidence="4">Multi-pass membrane protein</topology>
    </subcellularLocation>
    <subcellularLocation>
        <location evidence="6">Basolateral cell membrane</location>
        <topology evidence="4">Multi-pass membrane protein</topology>
    </subcellularLocation>
</comment>
<comment type="subcellular location">
    <molecule>Isoform WB</molecule>
    <subcellularLocation>
        <location evidence="6">Apical cell membrane</location>
        <topology evidence="4">Multi-pass membrane protein</topology>
    </subcellularLocation>
    <subcellularLocation>
        <location evidence="6">Basolateral cell membrane</location>
        <topology evidence="4">Multi-pass membrane protein</topology>
    </subcellularLocation>
</comment>
<comment type="subcellular location">
    <molecule>Isoform XB</molecule>
    <subcellularLocation>
        <location evidence="6">Basolateral cell membrane</location>
        <topology evidence="4">Multi-pass membrane protein</topology>
    </subcellularLocation>
</comment>
<comment type="subcellular location">
    <molecule>Isoform ZA</molecule>
    <subcellularLocation>
        <location evidence="6">Basolateral cell membrane</location>
        <topology evidence="4">Multi-pass membrane protein</topology>
    </subcellularLocation>
</comment>
<comment type="subcellular location">
    <molecule>Isoform ZB</molecule>
    <subcellularLocation>
        <location evidence="6">Basolateral cell membrane</location>
        <topology evidence="4">Multi-pass membrane protein</topology>
    </subcellularLocation>
</comment>
<comment type="alternative products">
    <event type="alternative splicing"/>
    <isoform>
        <id>Q01814-1</id>
        <name>WB</name>
        <name>AIIICI</name>
        <sequence type="displayed"/>
    </isoform>
    <isoform>
        <id>Q01814-2</id>
        <name>WA</name>
        <name>AIIICII</name>
        <sequence type="described" ref="VSP_000386"/>
    </isoform>
    <isoform>
        <id>Q01814-3</id>
        <name>YA</name>
        <name>AIICII</name>
        <sequence type="described" ref="VSP_000385 VSP_000386"/>
    </isoform>
    <isoform>
        <id>Q01814-4</id>
        <name>ZA</name>
        <name>AICII</name>
        <sequence type="described" ref="VSP_000384 VSP_000386"/>
    </isoform>
    <isoform>
        <id>Q01814-5</id>
        <name>YB</name>
        <name>AIICI</name>
        <sequence type="described" ref="VSP_000385"/>
    </isoform>
    <isoform>
        <id>Q01814-6</id>
        <name>ZB</name>
        <name>AICI</name>
        <sequence type="described" ref="VSP_000384"/>
    </isoform>
    <isoform>
        <id>Q01814-7</id>
        <name>XA</name>
        <sequence type="described" ref="VSP_040837 VSP_000386"/>
    </isoform>
    <isoform>
        <id>Q01814-8</id>
        <name>XB</name>
        <sequence type="described" ref="VSP_040837"/>
    </isoform>
    <text>There is a combination of two alternative spliced domains at N-terminal site A (Z, X, Y and W) and at C-terminal site C (A and B). So far the splice sites have only been studied independently. Experimental confirmation may be lacking for some isoforms.</text>
</comment>
<comment type="tissue specificity">
    <text evidence="12">Mainly expressed in brain cortex. Found in low levels in skeletal muscle, heart muscle, stomach, liver, kidney and lung. Isoforms containing segment B are found in brain cortex and at low levels in other tissues. Isoforms containing segments X and W are found at low levels in all tissues. Isoforms containing segment A and segment Z are found at low levels in skeletal muscle and heart muscle.</text>
</comment>
<comment type="disease">
    <text evidence="8 9">May act as a disease modifier. ATP2B2 variants may exacerbate the severity of non-syndromic sensorineural hearing loss in patients carrying causative variants in the CDH23 gene. Sensorineural deafness results from damage to the neural receptors of the inner ear, the nerve pathways to the brain, or the area of the brain that receives sound information.</text>
</comment>
<comment type="disease" evidence="11">
    <disease id="DI-06372">
        <name>Deafness, autosomal dominant, 82</name>
        <acronym>DFNA82</acronym>
        <description>A form of non-syndromic, sensorineural hearing loss. Sensorineural hearing loss results from damage to the neural receptors of the inner ear, the nerve pathways to the brain, or the area of the brain that receives sound information. DNFA82 is characterized by onset of rapidly progressive bilateral sensorineural hearing loss usually early in the first decade.</description>
        <dbReference type="MIM" id="619804"/>
    </disease>
    <text>The disease is caused by variants affecting the gene represented in this entry.</text>
</comment>
<comment type="similarity">
    <text evidence="16">Belongs to the cation transport ATPase (P-type) (TC 3.A.3) family. Type IIB subfamily.</text>
</comment>